<sequence length="562" mass="62937">MISISSTRVPLIPPEDIPLEDKKENEFGQLTSEEYLYQSKSRDGKALQDPILDAPAYHVSLITYLNYLILIILGHIHDFLGLTFQKEKHKDIMEQDGLAPWFSTFESFYVRRLKQRIDDCFSRPTTGVPGRFIRCLDRVSHNLNDYFTYPGTTSMCLNLSSYNYLGFAQSEGQCTTAALEATDKYGVYSGGPRTRIGTTDLHVMTEKYVAQFVGKEDAILFSMGYGTNANFFNSFLDSKCLVISDSLNHTSIRTGVRLSGAAVKTFKHNDMRALEKLIREQIVQGQSKTHRPWKKIIICVEGLYSMEGTMANLPKLVELKKKYKCYLFVDEAHSIGAMGPSGRGVCDFFGIPCSDIDIMMGTLTKSFGAAGGYIAADKWIIDRFRLDLTTPHYGEPTPAPVLAQIASSLKTITGDINPGEGQERLQRIAFNARYLRLALQRLGFIVYGIADSPVIPMLLYAPSKMPAFSRMMLQRKIAVVVVAYPATPLIESRVRFCVSAALTKEDIDYLLQHINEVGDKLFLKVSSGKAGGSLDGKPPRWNIDEVIKRTPTDCKDDSFFRI</sequence>
<proteinExistence type="inferred from homology"/>
<gene>
    <name type="primary">LCB2</name>
    <name type="ordered locus">KLLA0D02134g</name>
</gene>
<dbReference type="EC" id="2.3.1.50"/>
<dbReference type="EMBL" id="U15646">
    <property type="protein sequence ID" value="AAC49535.1"/>
    <property type="molecule type" value="Genomic_DNA"/>
</dbReference>
<dbReference type="EMBL" id="CR382124">
    <property type="protein sequence ID" value="CAH00259.1"/>
    <property type="molecule type" value="Genomic_DNA"/>
</dbReference>
<dbReference type="PIR" id="JC5182">
    <property type="entry name" value="JC5182"/>
</dbReference>
<dbReference type="RefSeq" id="XP_453163.1">
    <property type="nucleotide sequence ID" value="XM_453163.1"/>
</dbReference>
<dbReference type="SMR" id="P48241"/>
<dbReference type="FunCoup" id="P48241">
    <property type="interactions" value="419"/>
</dbReference>
<dbReference type="STRING" id="284590.P48241"/>
<dbReference type="PaxDb" id="284590-P48241"/>
<dbReference type="KEGG" id="kla:KLLA0_D02134g"/>
<dbReference type="eggNOG" id="KOG1357">
    <property type="taxonomic scope" value="Eukaryota"/>
</dbReference>
<dbReference type="HOGENOM" id="CLU_015846_7_2_1"/>
<dbReference type="InParanoid" id="P48241"/>
<dbReference type="OMA" id="QPRANGC"/>
<dbReference type="UniPathway" id="UPA00222"/>
<dbReference type="Proteomes" id="UP000000598">
    <property type="component" value="Chromosome D"/>
</dbReference>
<dbReference type="GO" id="GO:0016020">
    <property type="term" value="C:membrane"/>
    <property type="evidence" value="ECO:0007669"/>
    <property type="project" value="UniProtKB-SubCell"/>
</dbReference>
<dbReference type="GO" id="GO:0017059">
    <property type="term" value="C:serine palmitoyltransferase complex"/>
    <property type="evidence" value="ECO:0007669"/>
    <property type="project" value="TreeGrafter"/>
</dbReference>
<dbReference type="GO" id="GO:0030170">
    <property type="term" value="F:pyridoxal phosphate binding"/>
    <property type="evidence" value="ECO:0007669"/>
    <property type="project" value="InterPro"/>
</dbReference>
<dbReference type="GO" id="GO:0004758">
    <property type="term" value="F:serine C-palmitoyltransferase activity"/>
    <property type="evidence" value="ECO:0007669"/>
    <property type="project" value="UniProtKB-EC"/>
</dbReference>
<dbReference type="GO" id="GO:0046513">
    <property type="term" value="P:ceramide biosynthetic process"/>
    <property type="evidence" value="ECO:0007669"/>
    <property type="project" value="TreeGrafter"/>
</dbReference>
<dbReference type="GO" id="GO:0046512">
    <property type="term" value="P:sphingosine biosynthetic process"/>
    <property type="evidence" value="ECO:0007669"/>
    <property type="project" value="TreeGrafter"/>
</dbReference>
<dbReference type="CDD" id="cd06454">
    <property type="entry name" value="KBL_like"/>
    <property type="match status" value="1"/>
</dbReference>
<dbReference type="Gene3D" id="3.90.1150.10">
    <property type="entry name" value="Aspartate Aminotransferase, domain 1"/>
    <property type="match status" value="1"/>
</dbReference>
<dbReference type="Gene3D" id="3.40.640.10">
    <property type="entry name" value="Type I PLP-dependent aspartate aminotransferase-like (Major domain)"/>
    <property type="match status" value="1"/>
</dbReference>
<dbReference type="InterPro" id="IPR001917">
    <property type="entry name" value="Aminotrans_II_pyridoxalP_BS"/>
</dbReference>
<dbReference type="InterPro" id="IPR004839">
    <property type="entry name" value="Aminotransferase_I/II_large"/>
</dbReference>
<dbReference type="InterPro" id="IPR050087">
    <property type="entry name" value="AON_synthase_class-II"/>
</dbReference>
<dbReference type="InterPro" id="IPR015424">
    <property type="entry name" value="PyrdxlP-dep_Trfase"/>
</dbReference>
<dbReference type="InterPro" id="IPR015421">
    <property type="entry name" value="PyrdxlP-dep_Trfase_major"/>
</dbReference>
<dbReference type="InterPro" id="IPR015422">
    <property type="entry name" value="PyrdxlP-dep_Trfase_small"/>
</dbReference>
<dbReference type="PANTHER" id="PTHR13693">
    <property type="entry name" value="CLASS II AMINOTRANSFERASE/8-AMINO-7-OXONONANOATE SYNTHASE"/>
    <property type="match status" value="1"/>
</dbReference>
<dbReference type="PANTHER" id="PTHR13693:SF3">
    <property type="entry name" value="LD36009P"/>
    <property type="match status" value="1"/>
</dbReference>
<dbReference type="Pfam" id="PF00155">
    <property type="entry name" value="Aminotran_1_2"/>
    <property type="match status" value="1"/>
</dbReference>
<dbReference type="SUPFAM" id="SSF53383">
    <property type="entry name" value="PLP-dependent transferases"/>
    <property type="match status" value="1"/>
</dbReference>
<dbReference type="PROSITE" id="PS00599">
    <property type="entry name" value="AA_TRANSFER_CLASS_2"/>
    <property type="match status" value="1"/>
</dbReference>
<reference key="1">
    <citation type="journal article" date="1996" name="Gene">
        <title>Sphingolipid synthesis: identification and characterization of mammalian cDNAs encoding the Lcb2 subunit of serine palmitoyltransferase.</title>
        <authorList>
            <person name="Nagiec M.M."/>
            <person name="Lester R.L."/>
            <person name="Dickson R.C."/>
        </authorList>
    </citation>
    <scope>NUCLEOTIDE SEQUENCE [GENOMIC DNA]</scope>
    <source>
        <strain>ATCC 96263 / JA6</strain>
    </source>
</reference>
<reference key="2">
    <citation type="journal article" date="2004" name="Nature">
        <title>Genome evolution in yeasts.</title>
        <authorList>
            <person name="Dujon B."/>
            <person name="Sherman D."/>
            <person name="Fischer G."/>
            <person name="Durrens P."/>
            <person name="Casaregola S."/>
            <person name="Lafontaine I."/>
            <person name="de Montigny J."/>
            <person name="Marck C."/>
            <person name="Neuveglise C."/>
            <person name="Talla E."/>
            <person name="Goffard N."/>
            <person name="Frangeul L."/>
            <person name="Aigle M."/>
            <person name="Anthouard V."/>
            <person name="Babour A."/>
            <person name="Barbe V."/>
            <person name="Barnay S."/>
            <person name="Blanchin S."/>
            <person name="Beckerich J.-M."/>
            <person name="Beyne E."/>
            <person name="Bleykasten C."/>
            <person name="Boisrame A."/>
            <person name="Boyer J."/>
            <person name="Cattolico L."/>
            <person name="Confanioleri F."/>
            <person name="de Daruvar A."/>
            <person name="Despons L."/>
            <person name="Fabre E."/>
            <person name="Fairhead C."/>
            <person name="Ferry-Dumazet H."/>
            <person name="Groppi A."/>
            <person name="Hantraye F."/>
            <person name="Hennequin C."/>
            <person name="Jauniaux N."/>
            <person name="Joyet P."/>
            <person name="Kachouri R."/>
            <person name="Kerrest A."/>
            <person name="Koszul R."/>
            <person name="Lemaire M."/>
            <person name="Lesur I."/>
            <person name="Ma L."/>
            <person name="Muller H."/>
            <person name="Nicaud J.-M."/>
            <person name="Nikolski M."/>
            <person name="Oztas S."/>
            <person name="Ozier-Kalogeropoulos O."/>
            <person name="Pellenz S."/>
            <person name="Potier S."/>
            <person name="Richard G.-F."/>
            <person name="Straub M.-L."/>
            <person name="Suleau A."/>
            <person name="Swennen D."/>
            <person name="Tekaia F."/>
            <person name="Wesolowski-Louvel M."/>
            <person name="Westhof E."/>
            <person name="Wirth B."/>
            <person name="Zeniou-Meyer M."/>
            <person name="Zivanovic Y."/>
            <person name="Bolotin-Fukuhara M."/>
            <person name="Thierry A."/>
            <person name="Bouchier C."/>
            <person name="Caudron B."/>
            <person name="Scarpelli C."/>
            <person name="Gaillardin C."/>
            <person name="Weissenbach J."/>
            <person name="Wincker P."/>
            <person name="Souciet J.-L."/>
        </authorList>
    </citation>
    <scope>NUCLEOTIDE SEQUENCE [LARGE SCALE GENOMIC DNA]</scope>
    <source>
        <strain>ATCC 8585 / CBS 2359 / DSM 70799 / NBRC 1267 / NRRL Y-1140 / WM37</strain>
    </source>
</reference>
<accession>P48241</accession>
<accession>Q6CSC6</accession>
<comment type="catalytic activity">
    <reaction>
        <text>L-serine + hexadecanoyl-CoA + H(+) = 3-oxosphinganine + CO2 + CoA</text>
        <dbReference type="Rhea" id="RHEA:14761"/>
        <dbReference type="ChEBI" id="CHEBI:15378"/>
        <dbReference type="ChEBI" id="CHEBI:16526"/>
        <dbReference type="ChEBI" id="CHEBI:33384"/>
        <dbReference type="ChEBI" id="CHEBI:57287"/>
        <dbReference type="ChEBI" id="CHEBI:57379"/>
        <dbReference type="ChEBI" id="CHEBI:58299"/>
        <dbReference type="EC" id="2.3.1.50"/>
    </reaction>
</comment>
<comment type="cofactor">
    <cofactor>
        <name>pyridoxal 5'-phosphate</name>
        <dbReference type="ChEBI" id="CHEBI:597326"/>
    </cofactor>
</comment>
<comment type="pathway">
    <text>Lipid metabolism; sphingolipid metabolism.</text>
</comment>
<comment type="subcellular location">
    <subcellularLocation>
        <location>Membrane</location>
        <topology>Single-pass membrane protein</topology>
    </subcellularLocation>
</comment>
<comment type="similarity">
    <text evidence="3">Belongs to the class-II pyridoxal-phosphate-dependent aminotransferase family.</text>
</comment>
<organism>
    <name type="scientific">Kluyveromyces lactis (strain ATCC 8585 / CBS 2359 / DSM 70799 / NBRC 1267 / NRRL Y-1140 / WM37)</name>
    <name type="common">Yeast</name>
    <name type="synonym">Candida sphaerica</name>
    <dbReference type="NCBI Taxonomy" id="284590"/>
    <lineage>
        <taxon>Eukaryota</taxon>
        <taxon>Fungi</taxon>
        <taxon>Dikarya</taxon>
        <taxon>Ascomycota</taxon>
        <taxon>Saccharomycotina</taxon>
        <taxon>Saccharomycetes</taxon>
        <taxon>Saccharomycetales</taxon>
        <taxon>Saccharomycetaceae</taxon>
        <taxon>Kluyveromyces</taxon>
    </lineage>
</organism>
<protein>
    <recommendedName>
        <fullName>Serine palmitoyltransferase 2</fullName>
        <shortName>SPT 2</shortName>
        <ecNumber>2.3.1.50</ecNumber>
    </recommendedName>
    <alternativeName>
        <fullName>Long chain base biosynthesis protein 2</fullName>
    </alternativeName>
</protein>
<evidence type="ECO:0000250" key="1"/>
<evidence type="ECO:0000255" key="2"/>
<evidence type="ECO:0000305" key="3"/>
<name>LCB2_KLULA</name>
<keyword id="KW-0012">Acyltransferase</keyword>
<keyword id="KW-0443">Lipid metabolism</keyword>
<keyword id="KW-0472">Membrane</keyword>
<keyword id="KW-0663">Pyridoxal phosphate</keyword>
<keyword id="KW-1185">Reference proteome</keyword>
<keyword id="KW-0746">Sphingolipid metabolism</keyword>
<keyword id="KW-0808">Transferase</keyword>
<keyword id="KW-0812">Transmembrane</keyword>
<keyword id="KW-1133">Transmembrane helix</keyword>
<feature type="chain" id="PRO_0000163860" description="Serine palmitoyltransferase 2">
    <location>
        <begin position="1"/>
        <end position="562"/>
    </location>
</feature>
<feature type="transmembrane region" description="Helical" evidence="2">
    <location>
        <begin position="61"/>
        <end position="81"/>
    </location>
</feature>
<feature type="modified residue" description="N6-(pyridoxal phosphate)lysine" evidence="1">
    <location>
        <position position="365"/>
    </location>
</feature>
<feature type="sequence conflict" description="In Ref. 1; AAC49535." evidence="3" ref="1">
    <original>G</original>
    <variation>V</variation>
    <location>
        <position position="191"/>
    </location>
</feature>
<feature type="sequence conflict" description="In Ref. 1; AAC49535." evidence="3" ref="1">
    <original>S</original>
    <variation>L</variation>
    <location>
        <position position="492"/>
    </location>
</feature>